<name>ICR3_ARATH</name>
<protein>
    <recommendedName>
        <fullName>Interactor of constitutive active ROPs 3</fullName>
    </recommendedName>
    <alternativeName>
        <fullName>ROP-interactive partner 5</fullName>
    </alternativeName>
</protein>
<gene>
    <name type="primary">ICR3</name>
    <name type="synonym">RIP5</name>
    <name type="ordered locus">At5g60210</name>
    <name type="ORF">F15L12.15</name>
</gene>
<accession>Q9LSS5</accession>
<accession>Q0WQ47</accession>
<comment type="function">
    <text evidence="1">Acts as a scaffold, mediating interaction of ROPs with different proteins.</text>
</comment>
<comment type="subunit">
    <text evidence="6">Interacts with ARAC11 in vitro.</text>
</comment>
<comment type="tissue specificity">
    <text evidence="5">Expressed in flowers.</text>
</comment>
<comment type="similarity">
    <text evidence="7">Belongs to the ICR family.</text>
</comment>
<proteinExistence type="evidence at protein level"/>
<keyword id="KW-0175">Coiled coil</keyword>
<keyword id="KW-0597">Phosphoprotein</keyword>
<keyword id="KW-1185">Reference proteome</keyword>
<dbReference type="EMBL" id="AB026632">
    <property type="protein sequence ID" value="BAA97502.1"/>
    <property type="molecule type" value="Genomic_DNA"/>
</dbReference>
<dbReference type="EMBL" id="CP002688">
    <property type="protein sequence ID" value="AED97293.1"/>
    <property type="molecule type" value="Genomic_DNA"/>
</dbReference>
<dbReference type="EMBL" id="CP002688">
    <property type="protein sequence ID" value="AED97294.1"/>
    <property type="molecule type" value="Genomic_DNA"/>
</dbReference>
<dbReference type="EMBL" id="CP002688">
    <property type="protein sequence ID" value="ANM70940.1"/>
    <property type="molecule type" value="Genomic_DNA"/>
</dbReference>
<dbReference type="EMBL" id="CP002688">
    <property type="protein sequence ID" value="ANM70941.1"/>
    <property type="molecule type" value="Genomic_DNA"/>
</dbReference>
<dbReference type="EMBL" id="AK228858">
    <property type="protein sequence ID" value="BAF00752.1"/>
    <property type="molecule type" value="mRNA"/>
</dbReference>
<dbReference type="RefSeq" id="NP_001190579.1">
    <property type="nucleotide sequence ID" value="NM_001203650.2"/>
</dbReference>
<dbReference type="RefSeq" id="NP_001318845.1">
    <property type="nucleotide sequence ID" value="NM_001345401.1"/>
</dbReference>
<dbReference type="RefSeq" id="NP_001332510.1">
    <property type="nucleotide sequence ID" value="NM_001345403.1"/>
</dbReference>
<dbReference type="RefSeq" id="NP_200829.5">
    <property type="nucleotide sequence ID" value="NM_125414.6"/>
</dbReference>
<dbReference type="SMR" id="Q9LSS5"/>
<dbReference type="BioGRID" id="21387">
    <property type="interactions" value="1"/>
</dbReference>
<dbReference type="FunCoup" id="Q9LSS5">
    <property type="interactions" value="1567"/>
</dbReference>
<dbReference type="STRING" id="3702.Q9LSS5"/>
<dbReference type="iPTMnet" id="Q9LSS5"/>
<dbReference type="PaxDb" id="3702-AT5G60210.1"/>
<dbReference type="EnsemblPlants" id="AT5G60210.1">
    <property type="protein sequence ID" value="AT5G60210.1"/>
    <property type="gene ID" value="AT5G60210"/>
</dbReference>
<dbReference type="EnsemblPlants" id="AT5G60210.2">
    <property type="protein sequence ID" value="AT5G60210.2"/>
    <property type="gene ID" value="AT5G60210"/>
</dbReference>
<dbReference type="EnsemblPlants" id="AT5G60210.4">
    <property type="protein sequence ID" value="AT5G60210.4"/>
    <property type="gene ID" value="AT5G60210"/>
</dbReference>
<dbReference type="EnsemblPlants" id="AT5G60210.6">
    <property type="protein sequence ID" value="AT5G60210.6"/>
    <property type="gene ID" value="AT5G60210"/>
</dbReference>
<dbReference type="GeneID" id="836143"/>
<dbReference type="Gramene" id="AT5G60210.1">
    <property type="protein sequence ID" value="AT5G60210.1"/>
    <property type="gene ID" value="AT5G60210"/>
</dbReference>
<dbReference type="Gramene" id="AT5G60210.2">
    <property type="protein sequence ID" value="AT5G60210.2"/>
    <property type="gene ID" value="AT5G60210"/>
</dbReference>
<dbReference type="Gramene" id="AT5G60210.4">
    <property type="protein sequence ID" value="AT5G60210.4"/>
    <property type="gene ID" value="AT5G60210"/>
</dbReference>
<dbReference type="Gramene" id="AT5G60210.6">
    <property type="protein sequence ID" value="AT5G60210.6"/>
    <property type="gene ID" value="AT5G60210"/>
</dbReference>
<dbReference type="KEGG" id="ath:AT5G60210"/>
<dbReference type="Araport" id="AT5G60210"/>
<dbReference type="TAIR" id="AT5G60210">
    <property type="gene designation" value="RIP5"/>
</dbReference>
<dbReference type="eggNOG" id="ENOG502QT2U">
    <property type="taxonomic scope" value="Eukaryota"/>
</dbReference>
<dbReference type="HOGENOM" id="CLU_022222_0_0_1"/>
<dbReference type="InParanoid" id="Q9LSS5"/>
<dbReference type="OMA" id="ERDMACQ"/>
<dbReference type="PhylomeDB" id="Q9LSS5"/>
<dbReference type="PRO" id="PR:Q9LSS5"/>
<dbReference type="Proteomes" id="UP000006548">
    <property type="component" value="Chromosome 5"/>
</dbReference>
<dbReference type="ExpressionAtlas" id="Q9LSS5">
    <property type="expression patterns" value="baseline and differential"/>
</dbReference>
<dbReference type="Gene3D" id="1.10.287.1490">
    <property type="match status" value="1"/>
</dbReference>
<dbReference type="InterPro" id="IPR029688">
    <property type="entry name" value="ICR"/>
</dbReference>
<dbReference type="PANTHER" id="PTHR34224">
    <property type="entry name" value="INTERACTOR OF CONSTITUTIVE ACTIVE ROPS 2, CHLOROPLASTIC-RELATED"/>
    <property type="match status" value="1"/>
</dbReference>
<dbReference type="PANTHER" id="PTHR34224:SF18">
    <property type="entry name" value="INTERACTOR OF CONSTITUTIVE ACTIVE ROPS 3"/>
    <property type="match status" value="1"/>
</dbReference>
<feature type="chain" id="PRO_0000356303" description="Interactor of constitutive active ROPs 3">
    <location>
        <begin position="1"/>
        <end position="564"/>
    </location>
</feature>
<feature type="region of interest" description="Disordered" evidence="4">
    <location>
        <begin position="1"/>
        <end position="73"/>
    </location>
</feature>
<feature type="region of interest" description="Disordered" evidence="4">
    <location>
        <begin position="88"/>
        <end position="135"/>
    </location>
</feature>
<feature type="coiled-coil region" evidence="3">
    <location>
        <begin position="70"/>
        <end position="133"/>
    </location>
</feature>
<feature type="coiled-coil region" evidence="3">
    <location>
        <begin position="231"/>
        <end position="514"/>
    </location>
</feature>
<feature type="compositionally biased region" description="Polar residues" evidence="4">
    <location>
        <begin position="33"/>
        <end position="44"/>
    </location>
</feature>
<feature type="compositionally biased region" description="Basic and acidic residues" evidence="4">
    <location>
        <begin position="63"/>
        <end position="73"/>
    </location>
</feature>
<feature type="compositionally biased region" description="Basic and acidic residues" evidence="4">
    <location>
        <begin position="98"/>
        <end position="123"/>
    </location>
</feature>
<feature type="modified residue" description="Phosphoserine" evidence="2">
    <location>
        <position position="533"/>
    </location>
</feature>
<sequence>MQTQKARNGSPDVPKKVSPRAARPLKIAALEPESSSSPISATNRTPKDKSPNVLNRRSPRSPVSEKKRPSRITELELLVSQLQEELKKAKDQISVSETSKKQAEQEAEESRKQLQEVSSKLEESQNQFVETSALEEETDKTGSLVFQSVSQECDWEFSATAGERAGLAAVAHEIRQLKLQIEMVASSEAGHVKQAELYNSEVQLLRGNLMDTLFHVENFRNQLKDCEISEAETEALATETLRQLENAKKAVEELKSDGTKAVESYKKMAVELEQSKSRMVWLEALVNKLQNNPADLENHEILLKDYESLRRGESNEMDEEVSSLRCEVERLRAALEASDKKDQEGNVEASSRLRIQAELQSELKIAKSEIDELKARLMDKETELQFISEERDNFSMKLMKNQKEIDVEAELKKLREAIENLKADLMDKETELQIVSDENETLKSDIHKSETDVQDAFLKLGIAMEEADKSSKKAVRVTEQLEATQASNSEMETELRKLKVQSNQWRKAAEAATAMLSAGNNGKFAENYNQTNSPYSEDIDDELTKKKNGNVLKKIGVLWKKPQK</sequence>
<organism>
    <name type="scientific">Arabidopsis thaliana</name>
    <name type="common">Mouse-ear cress</name>
    <dbReference type="NCBI Taxonomy" id="3702"/>
    <lineage>
        <taxon>Eukaryota</taxon>
        <taxon>Viridiplantae</taxon>
        <taxon>Streptophyta</taxon>
        <taxon>Embryophyta</taxon>
        <taxon>Tracheophyta</taxon>
        <taxon>Spermatophyta</taxon>
        <taxon>Magnoliopsida</taxon>
        <taxon>eudicotyledons</taxon>
        <taxon>Gunneridae</taxon>
        <taxon>Pentapetalae</taxon>
        <taxon>rosids</taxon>
        <taxon>malvids</taxon>
        <taxon>Brassicales</taxon>
        <taxon>Brassicaceae</taxon>
        <taxon>Camelineae</taxon>
        <taxon>Arabidopsis</taxon>
    </lineage>
</organism>
<reference key="1">
    <citation type="submission" date="1999-04" db="EMBL/GenBank/DDBJ databases">
        <title>Structural analysis of Arabidopsis thaliana chromosome 5. XI.</title>
        <authorList>
            <person name="Kaneko T."/>
            <person name="Katoh T."/>
            <person name="Asamizu E."/>
            <person name="Sato S."/>
            <person name="Nakamura Y."/>
            <person name="Kotani H."/>
            <person name="Tabata S."/>
        </authorList>
    </citation>
    <scope>NUCLEOTIDE SEQUENCE [LARGE SCALE GENOMIC DNA]</scope>
    <source>
        <strain>cv. Columbia</strain>
    </source>
</reference>
<reference key="2">
    <citation type="journal article" date="2017" name="Plant J.">
        <title>Araport11: a complete reannotation of the Arabidopsis thaliana reference genome.</title>
        <authorList>
            <person name="Cheng C.Y."/>
            <person name="Krishnakumar V."/>
            <person name="Chan A.P."/>
            <person name="Thibaud-Nissen F."/>
            <person name="Schobel S."/>
            <person name="Town C.D."/>
        </authorList>
    </citation>
    <scope>GENOME REANNOTATION</scope>
    <source>
        <strain>cv. Columbia</strain>
    </source>
</reference>
<reference key="3">
    <citation type="submission" date="2006-07" db="EMBL/GenBank/DDBJ databases">
        <title>Large-scale analysis of RIKEN Arabidopsis full-length (RAFL) cDNAs.</title>
        <authorList>
            <person name="Totoki Y."/>
            <person name="Seki M."/>
            <person name="Ishida J."/>
            <person name="Nakajima M."/>
            <person name="Enju A."/>
            <person name="Kamiya A."/>
            <person name="Narusaka M."/>
            <person name="Shin-i T."/>
            <person name="Nakagawa M."/>
            <person name="Sakamoto N."/>
            <person name="Oishi K."/>
            <person name="Kohara Y."/>
            <person name="Kobayashi M."/>
            <person name="Toyoda A."/>
            <person name="Sakaki Y."/>
            <person name="Sakurai T."/>
            <person name="Iida K."/>
            <person name="Akiyama K."/>
            <person name="Satou M."/>
            <person name="Toyoda T."/>
            <person name="Konagaya A."/>
            <person name="Carninci P."/>
            <person name="Kawai J."/>
            <person name="Hayashizaki Y."/>
            <person name="Shinozaki K."/>
        </authorList>
    </citation>
    <scope>NUCLEOTIDE SEQUENCE [LARGE SCALE MRNA] OF 22-564</scope>
    <source>
        <strain>cv. Columbia</strain>
    </source>
</reference>
<reference key="4">
    <citation type="journal article" date="2003" name="Plant Mol. Biol.">
        <title>Isolation, sequence analysis, and expression studies of florally expressed cDNAs in Arabidopsis.</title>
        <authorList>
            <person name="Hu W."/>
            <person name="Wang Y."/>
            <person name="Bowers C."/>
            <person name="Ma H."/>
        </authorList>
    </citation>
    <scope>TISSUE SPECIFICITY</scope>
</reference>
<reference key="5">
    <citation type="journal article" date="2008" name="Mol. Plant">
        <title>RIP1 (ROP Interactive Partner 1)/ICR1 marks pollen germination sites and may act in the ROP1 pathway in the control of polarized pollen growth.</title>
        <authorList>
            <person name="Li S."/>
            <person name="Gu Y."/>
            <person name="Yan A."/>
            <person name="Lord E."/>
            <person name="Yang Z.B."/>
        </authorList>
    </citation>
    <scope>INTERACTION WITH ARAC11</scope>
    <scope>GENE FAMILY</scope>
    <scope>NOMENCLATURE</scope>
</reference>
<evidence type="ECO:0000250" key="1"/>
<evidence type="ECO:0000250" key="2">
    <source>
        <dbReference type="UniProtKB" id="Q9ZQC5"/>
    </source>
</evidence>
<evidence type="ECO:0000255" key="3"/>
<evidence type="ECO:0000256" key="4">
    <source>
        <dbReference type="SAM" id="MobiDB-lite"/>
    </source>
</evidence>
<evidence type="ECO:0000269" key="5">
    <source>
    </source>
</evidence>
<evidence type="ECO:0000269" key="6">
    <source>
    </source>
</evidence>
<evidence type="ECO:0000305" key="7"/>